<dbReference type="EMBL" id="EQ963473">
    <property type="protein sequence ID" value="EED55035.1"/>
    <property type="molecule type" value="Genomic_DNA"/>
</dbReference>
<dbReference type="RefSeq" id="XP_002373817.1">
    <property type="nucleotide sequence ID" value="XM_002373776.1"/>
</dbReference>
<dbReference type="EnsemblFungi" id="EED55035">
    <property type="protein sequence ID" value="EED55035"/>
    <property type="gene ID" value="AFLA_023060"/>
</dbReference>
<dbReference type="HOGENOM" id="CLU_2542154_0_0_1"/>
<feature type="chain" id="PRO_0000444458" description="Aspergillic acid biosynthesis cluster protein F">
    <location>
        <begin position="1"/>
        <end position="83"/>
    </location>
</feature>
<comment type="function">
    <text evidence="2">Part of the gene cluster that mediates the biosynthesis of aspergillic acid, a hydroxamic acid-containing pyrazinone with aliphatic side chains that originates from leucine (Leu) and isoleucine (Ile) (PubMed:29674152). Aspergillic acid has antibiotic properties and was shown to be lethal to mice (PubMed:29674152). The first step in the pathway is the production of deoxyaspergillic acid via a condensation between the Ile amine and the Leu carboxylic acid, followed by a reductive release from the protein forming the dipeptide aldehyde NH(2)-Leu-Ile-CHO, which could undergo an intermolecular cyclization resulting in a dihydropyrazinone (PubMed:29674152). As the NRPS asaC lacks a condensation domain, it is improbable that it is responsible for condensation of Leu and Ile (PubMed:29674152). One possibility is that asaC acts on a previously condensed dipeptide and functions as a Leu-Ile reductase to yield deoxyaspergillic acid (PubMed:29674152). After asaC forms deoxyaspergillic acid, the cytochrome P450 asaD oxidizes the pyrazinone to the hydroxamic acid-containing bioactive metabolite aspergillic acid (PubMed:29674152). The hydroxylase/desaturase asaB can then convert aspergillic acid to hydroxyaspergillic acid (PubMed:29674152). Both aspergillic acid and hydroxyaspergillic acid can form complexes with iron producing ferriaspergillin analogs (PubMed:29674152).</text>
</comment>
<comment type="pathway">
    <text evidence="4">Secondary metabolite biosynthesis.</text>
</comment>
<comment type="induction">
    <text evidence="1">Expressed during the earliest stages of maize kernel infection (PubMed:23834374).</text>
</comment>
<comment type="disruption phenotype">
    <text evidence="2">Does not affect ferriaspergillin production (PubMed:29674152).</text>
</comment>
<protein>
    <recommendedName>
        <fullName evidence="3">Aspergillic acid biosynthesis cluster protein F</fullName>
    </recommendedName>
</protein>
<name>ASAF_ASPFN</name>
<reference key="1">
    <citation type="journal article" date="2015" name="Genome Announc.">
        <title>Genome sequence of Aspergillus flavus NRRL 3357, a strain that causes aflatoxin contamination of food and feed.</title>
        <authorList>
            <person name="Nierman W.C."/>
            <person name="Yu J."/>
            <person name="Fedorova-Abrams N.D."/>
            <person name="Losada L."/>
            <person name="Cleveland T.E."/>
            <person name="Bhatnagar D."/>
            <person name="Bennett J.W."/>
            <person name="Dean R."/>
            <person name="Payne G.A."/>
        </authorList>
    </citation>
    <scope>NUCLEOTIDE SEQUENCE [LARGE SCALE GENOMIC DNA]</scope>
    <source>
        <strain>ATCC 200026 / FGSC A1120 / IAM 13836 / NRRL 3357 / JCM 12722 / SRRC 167</strain>
    </source>
</reference>
<reference key="2">
    <citation type="journal article" date="2013" name="Mol. Plant Pathol.">
        <title>Localization, morphology and transcriptional profile of Aspergillus flavus during seed colonization.</title>
        <authorList>
            <person name="Dolezal A.L."/>
            <person name="Obrian G.R."/>
            <person name="Nielsen D.M."/>
            <person name="Woloshuk C.P."/>
            <person name="Boston R.S."/>
            <person name="Payne G.A."/>
        </authorList>
    </citation>
    <scope>IDENTIFICATION WITHIN THE CLUSTER</scope>
    <scope>INDUCTION</scope>
</reference>
<reference key="3">
    <citation type="journal article" date="2018" name="Fungal Genet. Biol.">
        <title>Identification and functional analysis of the aspergillic acid gene cluster in Aspergillus flavus.</title>
        <authorList>
            <person name="Lebar M.D."/>
            <person name="Cary J.W."/>
            <person name="Majumdar R."/>
            <person name="Carter-Wientjes C.H."/>
            <person name="Mack B.M."/>
            <person name="Wei Q."/>
            <person name="Uka V."/>
            <person name="De Saeger S."/>
            <person name="Diana Di Mavungu J."/>
        </authorList>
    </citation>
    <scope>FUNCTION</scope>
    <scope>DISRUPTION PHENOTYPE</scope>
    <scope>PATHWAY</scope>
</reference>
<proteinExistence type="evidence at transcript level"/>
<organism>
    <name type="scientific">Aspergillus flavus (strain ATCC 200026 / FGSC A1120 / IAM 13836 / NRRL 3357 / JCM 12722 / SRRC 167)</name>
    <dbReference type="NCBI Taxonomy" id="332952"/>
    <lineage>
        <taxon>Eukaryota</taxon>
        <taxon>Fungi</taxon>
        <taxon>Dikarya</taxon>
        <taxon>Ascomycota</taxon>
        <taxon>Pezizomycotina</taxon>
        <taxon>Eurotiomycetes</taxon>
        <taxon>Eurotiomycetidae</taxon>
        <taxon>Eurotiales</taxon>
        <taxon>Aspergillaceae</taxon>
        <taxon>Aspergillus</taxon>
        <taxon>Aspergillus subgen. Circumdati</taxon>
    </lineage>
</organism>
<sequence length="83" mass="9194">MSPTITRPLIGQLCPLTNVGQIAETFSSEEVSFVETVDPLRHASKGGHHDDDNLPQGTLNNIWRGNPVIAWAALLRIAHKHFR</sequence>
<evidence type="ECO:0000269" key="1">
    <source>
    </source>
</evidence>
<evidence type="ECO:0000269" key="2">
    <source>
    </source>
</evidence>
<evidence type="ECO:0000303" key="3">
    <source>
    </source>
</evidence>
<evidence type="ECO:0000305" key="4">
    <source>
    </source>
</evidence>
<gene>
    <name evidence="3" type="primary">asaF</name>
    <name type="ORF">AFLA_023060</name>
</gene>
<accession>B8N0F2</accession>